<name>RNDI_DICDI</name>
<evidence type="ECO:0000250" key="1"/>
<evidence type="ECO:0000255" key="2">
    <source>
        <dbReference type="PROSITE-ProRule" id="PRU10045"/>
    </source>
</evidence>
<evidence type="ECO:0000255" key="3">
    <source>
        <dbReference type="PROSITE-ProRule" id="PRU10046"/>
    </source>
</evidence>
<evidence type="ECO:0000269" key="4">
    <source>
    </source>
</evidence>
<evidence type="ECO:0000269" key="5">
    <source>
    </source>
</evidence>
<evidence type="ECO:0000305" key="6"/>
<proteinExistence type="evidence at protein level"/>
<dbReference type="EC" id="4.6.1.19"/>
<dbReference type="EMBL" id="AAFI02000040">
    <property type="protein sequence ID" value="EAL66943.1"/>
    <property type="molecule type" value="Genomic_DNA"/>
</dbReference>
<dbReference type="PIR" id="JE0316">
    <property type="entry name" value="JE0316"/>
</dbReference>
<dbReference type="RefSeq" id="XP_640939.1">
    <property type="nucleotide sequence ID" value="XM_635847.1"/>
</dbReference>
<dbReference type="SMR" id="Q7M438"/>
<dbReference type="FunCoup" id="Q7M438">
    <property type="interactions" value="13"/>
</dbReference>
<dbReference type="GlyCosmos" id="Q7M438">
    <property type="glycosylation" value="1 site, No reported glycans"/>
</dbReference>
<dbReference type="GlyGen" id="Q7M438">
    <property type="glycosylation" value="1 site"/>
</dbReference>
<dbReference type="PaxDb" id="44689-DDB0230141"/>
<dbReference type="EnsemblProtists" id="EAL66943">
    <property type="protein sequence ID" value="EAL66943"/>
    <property type="gene ID" value="DDB_G0281293"/>
</dbReference>
<dbReference type="GeneID" id="8623004"/>
<dbReference type="KEGG" id="ddi:DDB_G0281293"/>
<dbReference type="dictyBase" id="DDB_G0281293">
    <property type="gene designation" value="ddiA"/>
</dbReference>
<dbReference type="VEuPathDB" id="AmoebaDB:DDB_G0281293"/>
<dbReference type="eggNOG" id="KOG1642">
    <property type="taxonomic scope" value="Eukaryota"/>
</dbReference>
<dbReference type="HOGENOM" id="CLU_069912_2_1_1"/>
<dbReference type="InParanoid" id="Q7M438"/>
<dbReference type="OMA" id="TNCHIGS"/>
<dbReference type="PhylomeDB" id="Q7M438"/>
<dbReference type="Reactome" id="R-DDI-6798695">
    <property type="pathway name" value="Neutrophil degranulation"/>
</dbReference>
<dbReference type="PRO" id="PR:Q7M438"/>
<dbReference type="Proteomes" id="UP000002195">
    <property type="component" value="Chromosome 3"/>
</dbReference>
<dbReference type="GO" id="GO:0005576">
    <property type="term" value="C:extracellular region"/>
    <property type="evidence" value="ECO:0000318"/>
    <property type="project" value="GO_Central"/>
</dbReference>
<dbReference type="GO" id="GO:0005764">
    <property type="term" value="C:lysosome"/>
    <property type="evidence" value="ECO:0007669"/>
    <property type="project" value="UniProtKB-SubCell"/>
</dbReference>
<dbReference type="GO" id="GO:0033897">
    <property type="term" value="F:ribonuclease T2 activity"/>
    <property type="evidence" value="ECO:0007669"/>
    <property type="project" value="UniProtKB-EC"/>
</dbReference>
<dbReference type="GO" id="GO:0003723">
    <property type="term" value="F:RNA binding"/>
    <property type="evidence" value="ECO:0007669"/>
    <property type="project" value="InterPro"/>
</dbReference>
<dbReference type="GO" id="GO:0004521">
    <property type="term" value="F:RNA endonuclease activity"/>
    <property type="evidence" value="ECO:0000318"/>
    <property type="project" value="GO_Central"/>
</dbReference>
<dbReference type="GO" id="GO:0006401">
    <property type="term" value="P:RNA catabolic process"/>
    <property type="evidence" value="ECO:0000318"/>
    <property type="project" value="GO_Central"/>
</dbReference>
<dbReference type="CDD" id="cd01061">
    <property type="entry name" value="RNase_T2_euk"/>
    <property type="match status" value="1"/>
</dbReference>
<dbReference type="FunFam" id="3.90.730.10:FF:000007">
    <property type="entry name" value="Ribonuclease T2"/>
    <property type="match status" value="1"/>
</dbReference>
<dbReference type="Gene3D" id="3.90.730.10">
    <property type="entry name" value="Ribonuclease T2-like"/>
    <property type="match status" value="1"/>
</dbReference>
<dbReference type="InterPro" id="IPR033697">
    <property type="entry name" value="Ribonuclease_T2_eukaryotic"/>
</dbReference>
<dbReference type="InterPro" id="IPR001568">
    <property type="entry name" value="RNase_T2-like"/>
</dbReference>
<dbReference type="InterPro" id="IPR036430">
    <property type="entry name" value="RNase_T2-like_sf"/>
</dbReference>
<dbReference type="InterPro" id="IPR018188">
    <property type="entry name" value="RNase_T2_His_AS_1"/>
</dbReference>
<dbReference type="InterPro" id="IPR033130">
    <property type="entry name" value="RNase_T2_His_AS_2"/>
</dbReference>
<dbReference type="PANTHER" id="PTHR11240">
    <property type="entry name" value="RIBONUCLEASE T2"/>
    <property type="match status" value="1"/>
</dbReference>
<dbReference type="PANTHER" id="PTHR11240:SF22">
    <property type="entry name" value="RIBONUCLEASE T2"/>
    <property type="match status" value="1"/>
</dbReference>
<dbReference type="Pfam" id="PF00445">
    <property type="entry name" value="Ribonuclease_T2"/>
    <property type="match status" value="1"/>
</dbReference>
<dbReference type="SUPFAM" id="SSF55895">
    <property type="entry name" value="Ribonuclease Rh-like"/>
    <property type="match status" value="1"/>
</dbReference>
<dbReference type="PROSITE" id="PS00530">
    <property type="entry name" value="RNASE_T2_1"/>
    <property type="match status" value="1"/>
</dbReference>
<dbReference type="PROSITE" id="PS00531">
    <property type="entry name" value="RNASE_T2_2"/>
    <property type="match status" value="1"/>
</dbReference>
<feature type="signal peptide" evidence="5">
    <location>
        <begin position="1"/>
        <end position="25"/>
    </location>
</feature>
<feature type="chain" id="PRO_0000030989" description="Ribonuclease DdI">
    <location>
        <begin position="26"/>
        <end position="223"/>
    </location>
</feature>
<feature type="active site" evidence="1">
    <location>
        <position position="63"/>
    </location>
</feature>
<feature type="active site" evidence="1">
    <location>
        <position position="113"/>
    </location>
</feature>
<feature type="active site" evidence="1">
    <location>
        <position position="117"/>
    </location>
</feature>
<feature type="glycosylation site" description="N-linked (GlcNAc...) asparagine" evidence="6">
    <location>
        <position position="144"/>
    </location>
</feature>
<feature type="disulfide bond" evidence="6">
    <location>
        <begin position="46"/>
        <end position="51"/>
    </location>
</feature>
<feature type="disulfide bond" evidence="6">
    <location>
        <begin position="78"/>
        <end position="120"/>
    </location>
</feature>
<feature type="disulfide bond" evidence="6">
    <location>
        <begin position="183"/>
        <end position="213"/>
    </location>
</feature>
<feature type="disulfide bond" evidence="6">
    <location>
        <begin position="194"/>
        <end position="205"/>
    </location>
</feature>
<feature type="sequence conflict" description="In Ref. 1; AA sequence." evidence="6" ref="1">
    <original>T</original>
    <variation>Y</variation>
    <location>
        <position position="16"/>
    </location>
</feature>
<feature type="sequence conflict" description="In Ref. 1; AA sequence." evidence="6" ref="1">
    <original>Y</original>
    <variation>V</variation>
    <location>
        <position position="24"/>
    </location>
</feature>
<comment type="function">
    <text evidence="4 5">Releases mononucleotides from RNA in the order of 3'-GMP &gt; 3'-UMP &gt; 3'-AMP &gt; 3'-CMP.</text>
</comment>
<comment type="catalytic activity">
    <reaction evidence="2 3">
        <text>a ribonucleotidyl-ribonucleotide-RNA + H2O = a 3'-end 3'-phospho-ribonucleotide-RNA + a 5'-end dephospho-ribonucleoside-RNA + H(+)</text>
        <dbReference type="Rhea" id="RHEA:68052"/>
        <dbReference type="Rhea" id="RHEA-COMP:10463"/>
        <dbReference type="Rhea" id="RHEA-COMP:13936"/>
        <dbReference type="Rhea" id="RHEA-COMP:17355"/>
        <dbReference type="ChEBI" id="CHEBI:15377"/>
        <dbReference type="ChEBI" id="CHEBI:15378"/>
        <dbReference type="ChEBI" id="CHEBI:83062"/>
        <dbReference type="ChEBI" id="CHEBI:138284"/>
        <dbReference type="ChEBI" id="CHEBI:173118"/>
        <dbReference type="EC" id="4.6.1.19"/>
    </reaction>
</comment>
<comment type="activity regulation">
    <text evidence="5">Inhibited by Cu(2+) and Zn(2+).</text>
</comment>
<comment type="biophysicochemical properties">
    <phDependence>
        <text evidence="5">Optimum pH is 5.0.</text>
    </phDependence>
</comment>
<comment type="subcellular location">
    <subcellularLocation>
        <location evidence="5">Lysosome</location>
    </subcellularLocation>
</comment>
<comment type="similarity">
    <text evidence="6">Belongs to the RNase T2 family.</text>
</comment>
<sequence length="223" mass="24584">MRLIAALLSVLLIASTAQSTVTIYESSKPGDFDFYLFVQQWIYSYCDSQTCIQNKEREAFTIHGLWPENSDGSYPSFCSGPSFNVNAIQDLEDQLNFDWPSLTGPNTDFWTHEFSKHGTCSITGPITDIHDYFATGIKLYTEFNITAALESENIYPSDSNTYKPVDITNAITTHFGGKPGIQCSSGQLSTVAVCIDKNSLSIMDCPDLQGWSCSGSVKFPSTA</sequence>
<protein>
    <recommendedName>
        <fullName>Ribonuclease DdI</fullName>
        <shortName>RNase DdI</shortName>
        <ecNumber>4.6.1.19</ecNumber>
    </recommendedName>
</protein>
<reference key="1">
    <citation type="journal article" date="1998" name="J. Biochem.">
        <title>Characterization and primary structure of a base non-specific and acid ribonuclease from Dictyostelium discoideum.</title>
        <authorList>
            <person name="Inokuchi N."/>
            <person name="Saitoh S."/>
            <person name="Kobayashi H."/>
            <person name="Itagaki T."/>
            <person name="Koyama T."/>
            <person name="Uchiyama S."/>
            <person name="Iwama M."/>
            <person name="Ohgi K."/>
            <person name="Irie M."/>
        </authorList>
    </citation>
    <scope>NUCLEOTIDE SEQUENCE [MRNA]</scope>
    <scope>PROTEIN SEQUENCE OF 26-223</scope>
    <scope>FUNCTION</scope>
    <scope>ACTIVITY REGULATION</scope>
    <scope>BIOPHYSICOCHEMICAL PROPERTIES</scope>
    <scope>SUBCELLULAR LOCATION</scope>
</reference>
<reference key="2">
    <citation type="journal article" date="2005" name="Nature">
        <title>The genome of the social amoeba Dictyostelium discoideum.</title>
        <authorList>
            <person name="Eichinger L."/>
            <person name="Pachebat J.A."/>
            <person name="Gloeckner G."/>
            <person name="Rajandream M.A."/>
            <person name="Sucgang R."/>
            <person name="Berriman M."/>
            <person name="Song J."/>
            <person name="Olsen R."/>
            <person name="Szafranski K."/>
            <person name="Xu Q."/>
            <person name="Tunggal B."/>
            <person name="Kummerfeld S."/>
            <person name="Madera M."/>
            <person name="Konfortov B.A."/>
            <person name="Rivero F."/>
            <person name="Bankier A.T."/>
            <person name="Lehmann R."/>
            <person name="Hamlin N."/>
            <person name="Davies R."/>
            <person name="Gaudet P."/>
            <person name="Fey P."/>
            <person name="Pilcher K."/>
            <person name="Chen G."/>
            <person name="Saunders D."/>
            <person name="Sodergren E.J."/>
            <person name="Davis P."/>
            <person name="Kerhornou A."/>
            <person name="Nie X."/>
            <person name="Hall N."/>
            <person name="Anjard C."/>
            <person name="Hemphill L."/>
            <person name="Bason N."/>
            <person name="Farbrother P."/>
            <person name="Desany B."/>
            <person name="Just E."/>
            <person name="Morio T."/>
            <person name="Rost R."/>
            <person name="Churcher C.M."/>
            <person name="Cooper J."/>
            <person name="Haydock S."/>
            <person name="van Driessche N."/>
            <person name="Cronin A."/>
            <person name="Goodhead I."/>
            <person name="Muzny D.M."/>
            <person name="Mourier T."/>
            <person name="Pain A."/>
            <person name="Lu M."/>
            <person name="Harper D."/>
            <person name="Lindsay R."/>
            <person name="Hauser H."/>
            <person name="James K.D."/>
            <person name="Quiles M."/>
            <person name="Madan Babu M."/>
            <person name="Saito T."/>
            <person name="Buchrieser C."/>
            <person name="Wardroper A."/>
            <person name="Felder M."/>
            <person name="Thangavelu M."/>
            <person name="Johnson D."/>
            <person name="Knights A."/>
            <person name="Loulseged H."/>
            <person name="Mungall K.L."/>
            <person name="Oliver K."/>
            <person name="Price C."/>
            <person name="Quail M.A."/>
            <person name="Urushihara H."/>
            <person name="Hernandez J."/>
            <person name="Rabbinowitsch E."/>
            <person name="Steffen D."/>
            <person name="Sanders M."/>
            <person name="Ma J."/>
            <person name="Kohara Y."/>
            <person name="Sharp S."/>
            <person name="Simmonds M.N."/>
            <person name="Spiegler S."/>
            <person name="Tivey A."/>
            <person name="Sugano S."/>
            <person name="White B."/>
            <person name="Walker D."/>
            <person name="Woodward J.R."/>
            <person name="Winckler T."/>
            <person name="Tanaka Y."/>
            <person name="Shaulsky G."/>
            <person name="Schleicher M."/>
            <person name="Weinstock G.M."/>
            <person name="Rosenthal A."/>
            <person name="Cox E.C."/>
            <person name="Chisholm R.L."/>
            <person name="Gibbs R.A."/>
            <person name="Loomis W.F."/>
            <person name="Platzer M."/>
            <person name="Kay R.R."/>
            <person name="Williams J.G."/>
            <person name="Dear P.H."/>
            <person name="Noegel A.A."/>
            <person name="Barrell B.G."/>
            <person name="Kuspa A."/>
        </authorList>
    </citation>
    <scope>NUCLEOTIDE SEQUENCE [LARGE SCALE GENOMIC DNA]</scope>
    <source>
        <strain>AX4</strain>
    </source>
</reference>
<reference key="3">
    <citation type="journal article" date="1999" name="Biosci. Biotechnol. Biochem.">
        <title>Comparison of base specificity and other enzymatic properties of two protozoan ribonucleases from Physarum polycephalum and Dictyostelium discoideum.</title>
        <authorList>
            <person name="Inokuchi N."/>
            <person name="Saitoh S."/>
            <person name="Kobayashi H."/>
            <person name="Itagaki T."/>
            <person name="Koyama T."/>
            <person name="Uchiyama S."/>
            <person name="Irie M."/>
        </authorList>
    </citation>
    <scope>FUNCTION</scope>
</reference>
<keyword id="KW-0903">Direct protein sequencing</keyword>
<keyword id="KW-1015">Disulfide bond</keyword>
<keyword id="KW-0255">Endonuclease</keyword>
<keyword id="KW-0325">Glycoprotein</keyword>
<keyword id="KW-0378">Hydrolase</keyword>
<keyword id="KW-0456">Lyase</keyword>
<keyword id="KW-0458">Lysosome</keyword>
<keyword id="KW-0540">Nuclease</keyword>
<keyword id="KW-1185">Reference proteome</keyword>
<keyword id="KW-0732">Signal</keyword>
<gene>
    <name type="primary">ddiA</name>
    <name type="synonym">ddi</name>
    <name type="ORF">DDB_G0281293</name>
</gene>
<accession>Q7M438</accession>
<accession>Q54U37</accession>
<organism>
    <name type="scientific">Dictyostelium discoideum</name>
    <name type="common">Social amoeba</name>
    <dbReference type="NCBI Taxonomy" id="44689"/>
    <lineage>
        <taxon>Eukaryota</taxon>
        <taxon>Amoebozoa</taxon>
        <taxon>Evosea</taxon>
        <taxon>Eumycetozoa</taxon>
        <taxon>Dictyostelia</taxon>
        <taxon>Dictyosteliales</taxon>
        <taxon>Dictyosteliaceae</taxon>
        <taxon>Dictyostelium</taxon>
    </lineage>
</organism>